<keyword id="KW-1185">Reference proteome</keyword>
<keyword id="KW-0687">Ribonucleoprotein</keyword>
<keyword id="KW-0689">Ribosomal protein</keyword>
<keyword id="KW-0694">RNA-binding</keyword>
<keyword id="KW-0699">rRNA-binding</keyword>
<comment type="function">
    <text evidence="1">With S4 and S12 plays an important role in translational accuracy.</text>
</comment>
<comment type="function">
    <text evidence="1">Located at the back of the 30S subunit body where it stabilizes the conformation of the head with respect to the body.</text>
</comment>
<comment type="subunit">
    <text evidence="1">Part of the 30S ribosomal subunit. Contacts proteins S4 and S8.</text>
</comment>
<comment type="domain">
    <text>The N-terminal domain interacts with the head of the 30S subunit; the C-terminal domain interacts with the body and contacts protein S4. The interaction surface between S4 and S5 is involved in control of translational fidelity.</text>
</comment>
<comment type="similarity">
    <text evidence="1">Belongs to the universal ribosomal protein uS5 family.</text>
</comment>
<accession>B0TC73</accession>
<evidence type="ECO:0000255" key="1">
    <source>
        <dbReference type="HAMAP-Rule" id="MF_01307"/>
    </source>
</evidence>
<evidence type="ECO:0000305" key="2"/>
<gene>
    <name evidence="1" type="primary">rpsE</name>
    <name type="ordered locus">Helmi_13470</name>
    <name type="ORF">HM1_1395</name>
</gene>
<feature type="chain" id="PRO_1000140860" description="Small ribosomal subunit protein uS5">
    <location>
        <begin position="1"/>
        <end position="166"/>
    </location>
</feature>
<feature type="domain" description="S5 DRBM" evidence="1">
    <location>
        <begin position="11"/>
        <end position="74"/>
    </location>
</feature>
<name>RS5_HELMI</name>
<reference key="1">
    <citation type="journal article" date="2008" name="J. Bacteriol.">
        <title>The genome of Heliobacterium modesticaldum, a phototrophic representative of the Firmicutes containing the simplest photosynthetic apparatus.</title>
        <authorList>
            <person name="Sattley W.M."/>
            <person name="Madigan M.T."/>
            <person name="Swingley W.D."/>
            <person name="Cheung P.C."/>
            <person name="Clocksin K.M."/>
            <person name="Conrad A.L."/>
            <person name="Dejesa L.C."/>
            <person name="Honchak B.M."/>
            <person name="Jung D.O."/>
            <person name="Karbach L.E."/>
            <person name="Kurdoglu A."/>
            <person name="Lahiri S."/>
            <person name="Mastrian S.D."/>
            <person name="Page L.E."/>
            <person name="Taylor H.L."/>
            <person name="Wang Z.T."/>
            <person name="Raymond J."/>
            <person name="Chen M."/>
            <person name="Blankenship R.E."/>
            <person name="Touchman J.W."/>
        </authorList>
    </citation>
    <scope>NUCLEOTIDE SEQUENCE [LARGE SCALE GENOMIC DNA]</scope>
    <source>
        <strain>ATCC 51547 / Ice1</strain>
    </source>
</reference>
<organism>
    <name type="scientific">Heliobacterium modesticaldum (strain ATCC 51547 / Ice1)</name>
    <dbReference type="NCBI Taxonomy" id="498761"/>
    <lineage>
        <taxon>Bacteria</taxon>
        <taxon>Bacillati</taxon>
        <taxon>Bacillota</taxon>
        <taxon>Clostridia</taxon>
        <taxon>Eubacteriales</taxon>
        <taxon>Heliobacteriaceae</taxon>
        <taxon>Heliomicrobium</taxon>
    </lineage>
</organism>
<sequence>MARIDASGLELQEKVVYINRVAKVVKGGRRFSFSALVVVGDGKGHVGFGLGKAGEVPEAIRKGVEDAKKNLIVVPVVGTTIPHPALGVFGAGRVLLKPASKGTGVIAGGPVRAVLELAGIHDILTKSLGSNNANNMVRATMEGLRSLKRAEEVAKLRGKTVEEITG</sequence>
<protein>
    <recommendedName>
        <fullName evidence="1">Small ribosomal subunit protein uS5</fullName>
    </recommendedName>
    <alternativeName>
        <fullName evidence="2">30S ribosomal protein S5</fullName>
    </alternativeName>
</protein>
<proteinExistence type="inferred from homology"/>
<dbReference type="EMBL" id="CP000930">
    <property type="protein sequence ID" value="ABZ83972.1"/>
    <property type="molecule type" value="Genomic_DNA"/>
</dbReference>
<dbReference type="RefSeq" id="WP_012282488.1">
    <property type="nucleotide sequence ID" value="NC_010337.2"/>
</dbReference>
<dbReference type="SMR" id="B0TC73"/>
<dbReference type="STRING" id="498761.HM1_1395"/>
<dbReference type="KEGG" id="hmo:HM1_1395"/>
<dbReference type="eggNOG" id="COG0098">
    <property type="taxonomic scope" value="Bacteria"/>
</dbReference>
<dbReference type="HOGENOM" id="CLU_065898_2_2_9"/>
<dbReference type="OrthoDB" id="9809045at2"/>
<dbReference type="Proteomes" id="UP000008550">
    <property type="component" value="Chromosome"/>
</dbReference>
<dbReference type="GO" id="GO:0015935">
    <property type="term" value="C:small ribosomal subunit"/>
    <property type="evidence" value="ECO:0007669"/>
    <property type="project" value="InterPro"/>
</dbReference>
<dbReference type="GO" id="GO:0019843">
    <property type="term" value="F:rRNA binding"/>
    <property type="evidence" value="ECO:0007669"/>
    <property type="project" value="UniProtKB-UniRule"/>
</dbReference>
<dbReference type="GO" id="GO:0003735">
    <property type="term" value="F:structural constituent of ribosome"/>
    <property type="evidence" value="ECO:0007669"/>
    <property type="project" value="InterPro"/>
</dbReference>
<dbReference type="GO" id="GO:0006412">
    <property type="term" value="P:translation"/>
    <property type="evidence" value="ECO:0007669"/>
    <property type="project" value="UniProtKB-UniRule"/>
</dbReference>
<dbReference type="FunFam" id="3.30.160.20:FF:000001">
    <property type="entry name" value="30S ribosomal protein S5"/>
    <property type="match status" value="1"/>
</dbReference>
<dbReference type="FunFam" id="3.30.230.10:FF:000002">
    <property type="entry name" value="30S ribosomal protein S5"/>
    <property type="match status" value="1"/>
</dbReference>
<dbReference type="Gene3D" id="3.30.160.20">
    <property type="match status" value="1"/>
</dbReference>
<dbReference type="Gene3D" id="3.30.230.10">
    <property type="match status" value="1"/>
</dbReference>
<dbReference type="HAMAP" id="MF_01307_B">
    <property type="entry name" value="Ribosomal_uS5_B"/>
    <property type="match status" value="1"/>
</dbReference>
<dbReference type="InterPro" id="IPR020568">
    <property type="entry name" value="Ribosomal_Su5_D2-typ_SF"/>
</dbReference>
<dbReference type="InterPro" id="IPR000851">
    <property type="entry name" value="Ribosomal_uS5"/>
</dbReference>
<dbReference type="InterPro" id="IPR005712">
    <property type="entry name" value="Ribosomal_uS5_bac-type"/>
</dbReference>
<dbReference type="InterPro" id="IPR005324">
    <property type="entry name" value="Ribosomal_uS5_C"/>
</dbReference>
<dbReference type="InterPro" id="IPR013810">
    <property type="entry name" value="Ribosomal_uS5_N"/>
</dbReference>
<dbReference type="InterPro" id="IPR018192">
    <property type="entry name" value="Ribosomal_uS5_N_CS"/>
</dbReference>
<dbReference type="InterPro" id="IPR014721">
    <property type="entry name" value="Ribsml_uS5_D2-typ_fold_subgr"/>
</dbReference>
<dbReference type="NCBIfam" id="TIGR01021">
    <property type="entry name" value="rpsE_bact"/>
    <property type="match status" value="1"/>
</dbReference>
<dbReference type="PANTHER" id="PTHR48277">
    <property type="entry name" value="MITOCHONDRIAL RIBOSOMAL PROTEIN S5"/>
    <property type="match status" value="1"/>
</dbReference>
<dbReference type="PANTHER" id="PTHR48277:SF1">
    <property type="entry name" value="MITOCHONDRIAL RIBOSOMAL PROTEIN S5"/>
    <property type="match status" value="1"/>
</dbReference>
<dbReference type="Pfam" id="PF00333">
    <property type="entry name" value="Ribosomal_S5"/>
    <property type="match status" value="1"/>
</dbReference>
<dbReference type="Pfam" id="PF03719">
    <property type="entry name" value="Ribosomal_S5_C"/>
    <property type="match status" value="1"/>
</dbReference>
<dbReference type="SUPFAM" id="SSF54768">
    <property type="entry name" value="dsRNA-binding domain-like"/>
    <property type="match status" value="1"/>
</dbReference>
<dbReference type="SUPFAM" id="SSF54211">
    <property type="entry name" value="Ribosomal protein S5 domain 2-like"/>
    <property type="match status" value="1"/>
</dbReference>
<dbReference type="PROSITE" id="PS00585">
    <property type="entry name" value="RIBOSOMAL_S5"/>
    <property type="match status" value="1"/>
</dbReference>
<dbReference type="PROSITE" id="PS50881">
    <property type="entry name" value="S5_DSRBD"/>
    <property type="match status" value="1"/>
</dbReference>